<evidence type="ECO:0000255" key="1"/>
<evidence type="ECO:0000255" key="2">
    <source>
        <dbReference type="PROSITE-ProRule" id="PRU00498"/>
    </source>
</evidence>
<evidence type="ECO:0000256" key="3">
    <source>
        <dbReference type="SAM" id="MobiDB-lite"/>
    </source>
</evidence>
<evidence type="ECO:0000269" key="4">
    <source>
    </source>
</evidence>
<evidence type="ECO:0000269" key="5">
    <source>
    </source>
</evidence>
<evidence type="ECO:0000303" key="6">
    <source>
    </source>
</evidence>
<evidence type="ECO:0000305" key="7"/>
<evidence type="ECO:0000305" key="8">
    <source>
    </source>
</evidence>
<accession>L0E163</accession>
<gene>
    <name evidence="6" type="primary">phqD</name>
</gene>
<organism>
    <name type="scientific">Penicillium fellutanum</name>
    <dbReference type="NCBI Taxonomy" id="70095"/>
    <lineage>
        <taxon>Eukaryota</taxon>
        <taxon>Fungi</taxon>
        <taxon>Dikarya</taxon>
        <taxon>Ascomycota</taxon>
        <taxon>Pezizomycotina</taxon>
        <taxon>Eurotiomycetes</taxon>
        <taxon>Eurotiomycetidae</taxon>
        <taxon>Eurotiales</taxon>
        <taxon>Aspergillaceae</taxon>
        <taxon>Penicillium</taxon>
    </lineage>
</organism>
<dbReference type="EC" id="1.5.1.2" evidence="8"/>
<dbReference type="EMBL" id="JQ708195">
    <property type="protein sequence ID" value="AGA37271.1"/>
    <property type="molecule type" value="Genomic_DNA"/>
</dbReference>
<dbReference type="SMR" id="L0E163"/>
<dbReference type="GlyCosmos" id="L0E163">
    <property type="glycosylation" value="1 site, No reported glycans"/>
</dbReference>
<dbReference type="GO" id="GO:0016020">
    <property type="term" value="C:membrane"/>
    <property type="evidence" value="ECO:0007669"/>
    <property type="project" value="UniProtKB-SubCell"/>
</dbReference>
<dbReference type="GO" id="GO:0004735">
    <property type="term" value="F:pyrroline-5-carboxylate reductase activity"/>
    <property type="evidence" value="ECO:0007669"/>
    <property type="project" value="UniProtKB-EC"/>
</dbReference>
<dbReference type="GO" id="GO:0009820">
    <property type="term" value="P:alkaloid metabolic process"/>
    <property type="evidence" value="ECO:0007669"/>
    <property type="project" value="UniProtKB-KW"/>
</dbReference>
<dbReference type="GO" id="GO:0055129">
    <property type="term" value="P:L-proline biosynthetic process"/>
    <property type="evidence" value="ECO:0007669"/>
    <property type="project" value="TreeGrafter"/>
</dbReference>
<dbReference type="Gene3D" id="3.40.50.720">
    <property type="entry name" value="NAD(P)-binding Rossmann-like Domain"/>
    <property type="match status" value="1"/>
</dbReference>
<dbReference type="Gene3D" id="1.10.3730.10">
    <property type="entry name" value="ProC C-terminal domain-like"/>
    <property type="match status" value="1"/>
</dbReference>
<dbReference type="HAMAP" id="MF_01925">
    <property type="entry name" value="P5C_reductase"/>
    <property type="match status" value="1"/>
</dbReference>
<dbReference type="InterPro" id="IPR008927">
    <property type="entry name" value="6-PGluconate_DH-like_C_sf"/>
</dbReference>
<dbReference type="InterPro" id="IPR036291">
    <property type="entry name" value="NAD(P)-bd_dom_sf"/>
</dbReference>
<dbReference type="InterPro" id="IPR028939">
    <property type="entry name" value="P5C_Rdtase_cat_N"/>
</dbReference>
<dbReference type="InterPro" id="IPR053790">
    <property type="entry name" value="P5CR-like_CS"/>
</dbReference>
<dbReference type="InterPro" id="IPR029036">
    <property type="entry name" value="P5CR_dimer"/>
</dbReference>
<dbReference type="InterPro" id="IPR000304">
    <property type="entry name" value="Pyrroline-COOH_reductase"/>
</dbReference>
<dbReference type="PANTHER" id="PTHR11645">
    <property type="entry name" value="PYRROLINE-5-CARBOXYLATE REDUCTASE"/>
    <property type="match status" value="1"/>
</dbReference>
<dbReference type="PANTHER" id="PTHR11645:SF0">
    <property type="entry name" value="PYRROLINE-5-CARBOXYLATE REDUCTASE 3"/>
    <property type="match status" value="1"/>
</dbReference>
<dbReference type="Pfam" id="PF03807">
    <property type="entry name" value="F420_oxidored"/>
    <property type="match status" value="1"/>
</dbReference>
<dbReference type="Pfam" id="PF14748">
    <property type="entry name" value="P5CR_dimer"/>
    <property type="match status" value="1"/>
</dbReference>
<dbReference type="PIRSF" id="PIRSF000193">
    <property type="entry name" value="Pyrrol-5-carb_rd"/>
    <property type="match status" value="1"/>
</dbReference>
<dbReference type="SUPFAM" id="SSF48179">
    <property type="entry name" value="6-phosphogluconate dehydrogenase C-terminal domain-like"/>
    <property type="match status" value="1"/>
</dbReference>
<dbReference type="SUPFAM" id="SSF51735">
    <property type="entry name" value="NAD(P)-binding Rossmann-fold domains"/>
    <property type="match status" value="1"/>
</dbReference>
<dbReference type="PROSITE" id="PS00521">
    <property type="entry name" value="P5CR"/>
    <property type="match status" value="1"/>
</dbReference>
<name>PHQD_PENFE</name>
<feature type="chain" id="PRO_0000448868" description="Pyrroline-5-carboxylate reductase">
    <location>
        <begin position="1"/>
        <end position="322"/>
    </location>
</feature>
<feature type="transmembrane region" description="Helical" evidence="1">
    <location>
        <begin position="9"/>
        <end position="29"/>
    </location>
</feature>
<feature type="transmembrane region" description="Helical" evidence="1">
    <location>
        <begin position="117"/>
        <end position="137"/>
    </location>
</feature>
<feature type="region of interest" description="Disordered" evidence="3">
    <location>
        <begin position="302"/>
        <end position="322"/>
    </location>
</feature>
<feature type="glycosylation site" description="N-linked (GlcNAc...) asparagine" evidence="2">
    <location>
        <position position="313"/>
    </location>
</feature>
<sequence>MALMSAVEYPNVAILGCGKLGQALLVGLLRSASGHPGRVKIRELKVTVRSARTAQLVRERISPLLRDRAVPPVWILQQDQNCNVAEQADIVLLGCKHSSLGELVHDLQGMRHDHRRILISLMGGVSPGLIVEALHFWTGPVVRAVCSVAVAVGESITLLSTSDDHTNDAESRRAVTELFASVGVVQWLPECQMHVASAVGASSLAFFAQMIEGLAQGVAEQHSNGANNAQQLPLETALAITAQAARGTAALLQQSTSPADLVAQVATKGGATAAGLRVLEKEKLVQTLRTCAAITAEATAALSQSAGSHGEDNTTDSKTSRA</sequence>
<reference key="1">
    <citation type="journal article" date="2012" name="Med. Chem. Commun.">
        <title>Comparative analysis of the biosynthetic systems for fungal bicyclo[2.2.2]diazaoctane indole alkaloids: the (+)/(-)-notoamide, paraherquamide and malbrancheamide pathways.</title>
        <authorList>
            <person name="Li S."/>
            <person name="Anand K."/>
            <person name="Tran H."/>
            <person name="Yu F."/>
            <person name="Finefield J.M."/>
            <person name="Sunderhaus J.D."/>
            <person name="McAfoos T.J."/>
            <person name="Tsukamoto S."/>
            <person name="Williams R.M."/>
            <person name="Sherman D.H."/>
        </authorList>
    </citation>
    <scope>NUCLEOTIDE SEQUENCE [GENOMIC DNA]</scope>
    <scope>FUNCTION</scope>
    <scope>PATHWAY</scope>
    <source>
        <strain>ATCC 20841 / MF5123</strain>
    </source>
</reference>
<reference key="2">
    <citation type="journal article" date="2019" name="Nat. Chem.">
        <title>Fungal indole alkaloid biogenesis through evolution of a bifunctional reductase/Diels-Alderase.</title>
        <authorList>
            <person name="Dan Q."/>
            <person name="Newmister S.A."/>
            <person name="Klas K.R."/>
            <person name="Fraley A.E."/>
            <person name="McAfoos T.J."/>
            <person name="Somoza A.D."/>
            <person name="Sunderhaus J.D."/>
            <person name="Ye Y."/>
            <person name="Shende V.V."/>
            <person name="Yu F."/>
            <person name="Sanders J.N."/>
            <person name="Brown W.C."/>
            <person name="Zhao L."/>
            <person name="Paton R.S."/>
            <person name="Houk K.N."/>
            <person name="Smith J.L."/>
            <person name="Sherman D.H."/>
            <person name="Williams R.M."/>
        </authorList>
    </citation>
    <scope>FUNCTION</scope>
</reference>
<proteinExistence type="inferred from homology"/>
<comment type="function">
    <text evidence="4 5 8">Pyrroline-5-carboxylate reductase; part of the gene cluster that mediates the biosynthesis of paraherquamide, a fungal indole alkaloid that belongs to a family of natural products containing a characteristic bicyclo[2.2.2]diazaoctane core (PubMed:23213353). The first steps in the biosynthesis of paraherquamide is the production of the beta-methyl-proline precursor from L-isoleucine (Probable). They require oxidation of a terminally hydroxylated L-isoleucine to the corresponding aldehyde by enzymes which have still to be identified (Probable). Spontaneous cyclization and dehydration would yield the 4-methyl pyrolline-5-carboxylic acid, which is then reduced by the pyrroline-5-carboxylate reductase phqD leading to the beta-methyl-proline precursor (Probable). The next step of paraherquamide biosynthesis involves coupling of beta-methyl-proline and L-tryptophan by the bimodular NRPS phqB, to produce a monooxopiperazine intermediate (Probable). The reductase (R) domain of phqB utilizes NADPH for hydride transfer to reduce the thioester bond of the T domain-tethered linear dipeptide to a hemithioaminal intermediate, which spontaneously cleaves the C-S bond to release the aldehyde product (PubMed:31548667). This compound undergoes spontaneous cyclization and dehydration to give a dienamine which is reverse prenylated at C-2 by the reverse prenyltransferase phqJ (Probable). The other prenyltransferase present in the cluster, phqI may be a redundant gene in the pathway (Probable). During biosynthetic assembly, the key step to produce the polycyclic core is catalyzed by the bifunctional reductase and intramolecular [4+2] Diels-Alderase, phqE, resulting in formation of the [2.2.2] diazaoctane intermediate preparaherquamide (PubMed:31548667). Following formation of preparaherquamide, an indole 2,3-epoxidation-initiated pinacol-like rearrangement is catalyzed by the phqK FAD-dependent monooxygenase (Probable). The prenyltransferase phqA, the cytochrome P450 monooxygenase phqL, and the FAD-linked oxidoreductase phqH (or the cytochrome P450 monooxygenase phqM), are proposed to be involved in the formation of the pyran ring (Probable). The FAD-dependent monooxygenase phqK is likely responsible for generation of the spiro-oxindole, and the N-methylation is likely mediated by the phqN methyltransferase leading to the isolable natural product paraherquamide F (Probable). However, the order of these biosynthetic steps has still to be determined (Probable). In late-stage paraherquamide biosynthesis, the third P450 monooxygenase, phqO, is probably responsible for the C-14 hydroxylation, transforming paraherquamide F to paraherquamide G, and paraherquamide E to the final product paraherquamide A (Probable). The expansion from the 6-membered ring pyran (in paraherquamides F and G) to the 7-membered dioxepin ring (in paraherquamides A and E) represents a poorly understood but intriguing process that probably involves the 2-oxoglutarate-dependent dioxygenase phqC (Probable). Finally, the remaining members of the paraherquamide cluster, including phqI as well as phqM (or phqH), do not have a clearly prescribed role and appear to be redundant (Probable).</text>
</comment>
<comment type="catalytic activity">
    <reaction evidence="8">
        <text>L-proline + NADP(+) = (S)-1-pyrroline-5-carboxylate + NADPH + 2 H(+)</text>
        <dbReference type="Rhea" id="RHEA:14109"/>
        <dbReference type="ChEBI" id="CHEBI:15378"/>
        <dbReference type="ChEBI" id="CHEBI:17388"/>
        <dbReference type="ChEBI" id="CHEBI:57783"/>
        <dbReference type="ChEBI" id="CHEBI:58349"/>
        <dbReference type="ChEBI" id="CHEBI:60039"/>
        <dbReference type="EC" id="1.5.1.2"/>
    </reaction>
</comment>
<comment type="catalytic activity">
    <reaction evidence="8">
        <text>L-proline + NAD(+) = (S)-1-pyrroline-5-carboxylate + NADH + 2 H(+)</text>
        <dbReference type="Rhea" id="RHEA:14105"/>
        <dbReference type="ChEBI" id="CHEBI:15378"/>
        <dbReference type="ChEBI" id="CHEBI:17388"/>
        <dbReference type="ChEBI" id="CHEBI:57540"/>
        <dbReference type="ChEBI" id="CHEBI:57945"/>
        <dbReference type="ChEBI" id="CHEBI:60039"/>
        <dbReference type="EC" id="1.5.1.2"/>
    </reaction>
</comment>
<comment type="pathway">
    <text evidence="8">Alkaloid biosynthesis.</text>
</comment>
<comment type="subcellular location">
    <subcellularLocation>
        <location evidence="1">Membrane</location>
        <topology evidence="1">Multi-pass membrane protein</topology>
    </subcellularLocation>
</comment>
<comment type="similarity">
    <text evidence="7">Belongs to the pyrroline-5-carboxylate reductase family.</text>
</comment>
<protein>
    <recommendedName>
        <fullName evidence="6">Pyrroline-5-carboxylate reductase</fullName>
        <shortName evidence="6">P5C reductase</shortName>
        <shortName evidence="6">P5CR</shortName>
        <ecNumber evidence="8">1.5.1.2</ecNumber>
    </recommendedName>
    <alternativeName>
        <fullName evidence="6">Paraherquamide biosynthesis cluster protein D</fullName>
    </alternativeName>
</protein>
<keyword id="KW-0017">Alkaloid metabolism</keyword>
<keyword id="KW-0028">Amino-acid biosynthesis</keyword>
<keyword id="KW-0325">Glycoprotein</keyword>
<keyword id="KW-0472">Membrane</keyword>
<keyword id="KW-0521">NADP</keyword>
<keyword id="KW-0560">Oxidoreductase</keyword>
<keyword id="KW-0641">Proline biosynthesis</keyword>
<keyword id="KW-0812">Transmembrane</keyword>
<keyword id="KW-1133">Transmembrane helix</keyword>